<keyword id="KW-0997">Cell inner membrane</keyword>
<keyword id="KW-1003">Cell membrane</keyword>
<keyword id="KW-0249">Electron transport</keyword>
<keyword id="KW-0285">Flavoprotein</keyword>
<keyword id="KW-0288">FMN</keyword>
<keyword id="KW-0472">Membrane</keyword>
<keyword id="KW-0597">Phosphoprotein</keyword>
<keyword id="KW-1278">Translocase</keyword>
<keyword id="KW-0812">Transmembrane</keyword>
<keyword id="KW-1133">Transmembrane helix</keyword>
<keyword id="KW-0813">Transport</keyword>
<dbReference type="EC" id="7.-.-.-" evidence="1"/>
<dbReference type="EMBL" id="AL513382">
    <property type="protein sequence ID" value="CAD01912.1"/>
    <property type="molecule type" value="Genomic_DNA"/>
</dbReference>
<dbReference type="EMBL" id="AE014613">
    <property type="protein sequence ID" value="AAO68973.1"/>
    <property type="molecule type" value="Genomic_DNA"/>
</dbReference>
<dbReference type="RefSeq" id="NP_456075.1">
    <property type="nucleotide sequence ID" value="NC_003198.1"/>
</dbReference>
<dbReference type="RefSeq" id="WP_000920820.1">
    <property type="nucleotide sequence ID" value="NZ_WSUR01000011.1"/>
</dbReference>
<dbReference type="SMR" id="Q8Z6Q7"/>
<dbReference type="STRING" id="220341.gene:17585602"/>
<dbReference type="KEGG" id="stt:t1323"/>
<dbReference type="KEGG" id="sty:STY1667"/>
<dbReference type="PATRIC" id="fig|220341.7.peg.1677"/>
<dbReference type="eggNOG" id="COG4659">
    <property type="taxonomic scope" value="Bacteria"/>
</dbReference>
<dbReference type="HOGENOM" id="CLU_077882_1_0_6"/>
<dbReference type="OMA" id="YSGAIHL"/>
<dbReference type="OrthoDB" id="9784165at2"/>
<dbReference type="Proteomes" id="UP000000541">
    <property type="component" value="Chromosome"/>
</dbReference>
<dbReference type="Proteomes" id="UP000002670">
    <property type="component" value="Chromosome"/>
</dbReference>
<dbReference type="GO" id="GO:0005886">
    <property type="term" value="C:plasma membrane"/>
    <property type="evidence" value="ECO:0007669"/>
    <property type="project" value="UniProtKB-SubCell"/>
</dbReference>
<dbReference type="GO" id="GO:0009055">
    <property type="term" value="F:electron transfer activity"/>
    <property type="evidence" value="ECO:0007669"/>
    <property type="project" value="InterPro"/>
</dbReference>
<dbReference type="GO" id="GO:0010181">
    <property type="term" value="F:FMN binding"/>
    <property type="evidence" value="ECO:0007669"/>
    <property type="project" value="InterPro"/>
</dbReference>
<dbReference type="GO" id="GO:0022900">
    <property type="term" value="P:electron transport chain"/>
    <property type="evidence" value="ECO:0007669"/>
    <property type="project" value="UniProtKB-UniRule"/>
</dbReference>
<dbReference type="HAMAP" id="MF_00479">
    <property type="entry name" value="RsxG_RnfG"/>
    <property type="match status" value="1"/>
</dbReference>
<dbReference type="InterPro" id="IPR007329">
    <property type="entry name" value="FMN-bd"/>
</dbReference>
<dbReference type="InterPro" id="IPR010209">
    <property type="entry name" value="Ion_transpt_RnfG/RsxG"/>
</dbReference>
<dbReference type="NCBIfam" id="NF002519">
    <property type="entry name" value="PRK01908.1"/>
    <property type="match status" value="1"/>
</dbReference>
<dbReference type="NCBIfam" id="TIGR01947">
    <property type="entry name" value="rnfG"/>
    <property type="match status" value="1"/>
</dbReference>
<dbReference type="PANTHER" id="PTHR36118">
    <property type="entry name" value="ION-TRANSLOCATING OXIDOREDUCTASE COMPLEX SUBUNIT G"/>
    <property type="match status" value="1"/>
</dbReference>
<dbReference type="PANTHER" id="PTHR36118:SF1">
    <property type="entry name" value="ION-TRANSLOCATING OXIDOREDUCTASE COMPLEX SUBUNIT G"/>
    <property type="match status" value="1"/>
</dbReference>
<dbReference type="Pfam" id="PF04205">
    <property type="entry name" value="FMN_bind"/>
    <property type="match status" value="1"/>
</dbReference>
<dbReference type="PIRSF" id="PIRSF006091">
    <property type="entry name" value="E_trnsport_RnfG"/>
    <property type="match status" value="1"/>
</dbReference>
<dbReference type="SMART" id="SM00900">
    <property type="entry name" value="FMN_bind"/>
    <property type="match status" value="1"/>
</dbReference>
<organism>
    <name type="scientific">Salmonella typhi</name>
    <dbReference type="NCBI Taxonomy" id="90370"/>
    <lineage>
        <taxon>Bacteria</taxon>
        <taxon>Pseudomonadati</taxon>
        <taxon>Pseudomonadota</taxon>
        <taxon>Gammaproteobacteria</taxon>
        <taxon>Enterobacterales</taxon>
        <taxon>Enterobacteriaceae</taxon>
        <taxon>Salmonella</taxon>
    </lineage>
</organism>
<protein>
    <recommendedName>
        <fullName evidence="1">Ion-translocating oxidoreductase complex subunit G</fullName>
        <ecNumber evidence="1">7.-.-.-</ecNumber>
    </recommendedName>
    <alternativeName>
        <fullName evidence="1">Rsx electron transport complex subunit G</fullName>
    </alternativeName>
</protein>
<proteinExistence type="inferred from homology"/>
<sequence length="206" mass="22252">MLKTIRKHGITLALFAAGSTGLTAVINQMTKSTIHEQALQQQHALFDQVLPPDRYNNNLQESCYLVDAPALGKGTHRVFIARKDDKPVAAIIEATAPDGYSGAIQLIVGADFNGTILGTRVTEHHETPGLGDKIERRLSDWITHFSGKTISGENDTHWAVKKDGGDFDQFTGATITPRAVVNAVKRAGLYAESLPAQLPHLTACGE</sequence>
<accession>Q8Z6Q7</accession>
<comment type="function">
    <text evidence="1">Part of a membrane-bound complex that couples electron transfer with translocation of ions across the membrane. Required to maintain the reduced state of SoxR.</text>
</comment>
<comment type="cofactor">
    <cofactor evidence="1">
        <name>FMN</name>
        <dbReference type="ChEBI" id="CHEBI:58210"/>
    </cofactor>
</comment>
<comment type="subunit">
    <text evidence="1">The complex is composed of six subunits: RsxA, RsxB, RsxC, RsxD, RsxE and RsxG.</text>
</comment>
<comment type="subcellular location">
    <subcellularLocation>
        <location evidence="1">Cell inner membrane</location>
        <topology evidence="1">Single-pass membrane protein</topology>
    </subcellularLocation>
</comment>
<comment type="similarity">
    <text evidence="1">Belongs to the RnfG family.</text>
</comment>
<name>RSXG_SALTI</name>
<feature type="chain" id="PRO_0000214640" description="Ion-translocating oxidoreductase complex subunit G">
    <location>
        <begin position="1"/>
        <end position="206"/>
    </location>
</feature>
<feature type="transmembrane region" description="Helical" evidence="1">
    <location>
        <begin position="9"/>
        <end position="29"/>
    </location>
</feature>
<feature type="modified residue" description="FMN phosphoryl threonine" evidence="1">
    <location>
        <position position="174"/>
    </location>
</feature>
<reference key="1">
    <citation type="journal article" date="2001" name="Nature">
        <title>Complete genome sequence of a multiple drug resistant Salmonella enterica serovar Typhi CT18.</title>
        <authorList>
            <person name="Parkhill J."/>
            <person name="Dougan G."/>
            <person name="James K.D."/>
            <person name="Thomson N.R."/>
            <person name="Pickard D."/>
            <person name="Wain J."/>
            <person name="Churcher C.M."/>
            <person name="Mungall K.L."/>
            <person name="Bentley S.D."/>
            <person name="Holden M.T.G."/>
            <person name="Sebaihia M."/>
            <person name="Baker S."/>
            <person name="Basham D."/>
            <person name="Brooks K."/>
            <person name="Chillingworth T."/>
            <person name="Connerton P."/>
            <person name="Cronin A."/>
            <person name="Davis P."/>
            <person name="Davies R.M."/>
            <person name="Dowd L."/>
            <person name="White N."/>
            <person name="Farrar J."/>
            <person name="Feltwell T."/>
            <person name="Hamlin N."/>
            <person name="Haque A."/>
            <person name="Hien T.T."/>
            <person name="Holroyd S."/>
            <person name="Jagels K."/>
            <person name="Krogh A."/>
            <person name="Larsen T.S."/>
            <person name="Leather S."/>
            <person name="Moule S."/>
            <person name="O'Gaora P."/>
            <person name="Parry C."/>
            <person name="Quail M.A."/>
            <person name="Rutherford K.M."/>
            <person name="Simmonds M."/>
            <person name="Skelton J."/>
            <person name="Stevens K."/>
            <person name="Whitehead S."/>
            <person name="Barrell B.G."/>
        </authorList>
    </citation>
    <scope>NUCLEOTIDE SEQUENCE [LARGE SCALE GENOMIC DNA]</scope>
    <source>
        <strain>CT18</strain>
    </source>
</reference>
<reference key="2">
    <citation type="journal article" date="2003" name="J. Bacteriol.">
        <title>Comparative genomics of Salmonella enterica serovar Typhi strains Ty2 and CT18.</title>
        <authorList>
            <person name="Deng W."/>
            <person name="Liou S.-R."/>
            <person name="Plunkett G. III"/>
            <person name="Mayhew G.F."/>
            <person name="Rose D.J."/>
            <person name="Burland V."/>
            <person name="Kodoyianni V."/>
            <person name="Schwartz D.C."/>
            <person name="Blattner F.R."/>
        </authorList>
    </citation>
    <scope>NUCLEOTIDE SEQUENCE [LARGE SCALE GENOMIC DNA]</scope>
    <source>
        <strain>ATCC 700931 / Ty2</strain>
    </source>
</reference>
<evidence type="ECO:0000255" key="1">
    <source>
        <dbReference type="HAMAP-Rule" id="MF_00479"/>
    </source>
</evidence>
<gene>
    <name evidence="1" type="primary">rsxG</name>
    <name type="ordered locus">STY1667</name>
    <name type="ordered locus">t1323</name>
</gene>